<protein>
    <recommendedName>
        <fullName evidence="1">Heme oxygenase (staphylobilin-producing) 1</fullName>
        <ecNumber evidence="1">1.14.99.48</ecNumber>
    </recommendedName>
    <alternativeName>
        <fullName evidence="1">Heme-degrading monooxygenase 1</fullName>
    </alternativeName>
    <alternativeName>
        <fullName evidence="1">Iron-regulated surface determinant 1</fullName>
    </alternativeName>
    <alternativeName>
        <fullName evidence="1">Iron-responsive surface determinant 1</fullName>
    </alternativeName>
</protein>
<gene>
    <name type="primary">isdG</name>
    <name type="ordered locus">MW1018</name>
</gene>
<keyword id="KW-0002">3D-structure</keyword>
<keyword id="KW-0963">Cytoplasm</keyword>
<keyword id="KW-0349">Heme</keyword>
<keyword id="KW-0408">Iron</keyword>
<keyword id="KW-0479">Metal-binding</keyword>
<keyword id="KW-0503">Monooxygenase</keyword>
<keyword id="KW-0560">Oxidoreductase</keyword>
<comment type="function">
    <text evidence="1 2">Allows bacterial pathogens to use the host heme as an iron source. Catalyzes the oxidative degradation of the heme macrocyclic porphyrin ring to the oxo-bilirubin chromophore staphylobilin (a mixture of the linear tetrapyrroles 5-oxo-delta-bilirubin and 15-oxo-beta-bilirubin) in the presence of a suitable electron donor such as ascorbate or NADPH--cytochrome P450 reductase, with subsequent release of free iron.</text>
</comment>
<comment type="catalytic activity">
    <reaction evidence="1">
        <text>heme b + 5 AH2 + 4 O2 + 2 H(+) = delta-staphylobilin + Fe(2+) + formaldehyde + 5 A + 4 H2O</text>
        <dbReference type="Rhea" id="RHEA:37039"/>
        <dbReference type="ChEBI" id="CHEBI:13193"/>
        <dbReference type="ChEBI" id="CHEBI:15377"/>
        <dbReference type="ChEBI" id="CHEBI:15378"/>
        <dbReference type="ChEBI" id="CHEBI:15379"/>
        <dbReference type="ChEBI" id="CHEBI:16842"/>
        <dbReference type="ChEBI" id="CHEBI:17499"/>
        <dbReference type="ChEBI" id="CHEBI:29033"/>
        <dbReference type="ChEBI" id="CHEBI:60344"/>
        <dbReference type="ChEBI" id="CHEBI:74361"/>
        <dbReference type="EC" id="1.14.99.48"/>
    </reaction>
</comment>
<comment type="catalytic activity">
    <reaction evidence="1">
        <text>heme b + 5 AH2 + 4 O2 + 2 H(+) = beta-staphylobilin + Fe(2+) + formaldehyde + 5 A + 4 H2O</text>
        <dbReference type="Rhea" id="RHEA:37363"/>
        <dbReference type="ChEBI" id="CHEBI:13193"/>
        <dbReference type="ChEBI" id="CHEBI:15377"/>
        <dbReference type="ChEBI" id="CHEBI:15378"/>
        <dbReference type="ChEBI" id="CHEBI:15379"/>
        <dbReference type="ChEBI" id="CHEBI:16842"/>
        <dbReference type="ChEBI" id="CHEBI:17499"/>
        <dbReference type="ChEBI" id="CHEBI:29033"/>
        <dbReference type="ChEBI" id="CHEBI:60344"/>
        <dbReference type="ChEBI" id="CHEBI:74362"/>
        <dbReference type="EC" id="1.14.99.48"/>
    </reaction>
</comment>
<comment type="subunit">
    <text evidence="1 2">Homodimer.</text>
</comment>
<comment type="subcellular location">
    <subcellularLocation>
        <location evidence="1">Cytoplasm</location>
    </subcellularLocation>
</comment>
<comment type="miscellaneous">
    <text>IsdG seems to carry out oxygenation of the heme without the assistance of any of the prosthetic groups or cofactors normally associated with activation of molecular oxygen.</text>
</comment>
<comment type="similarity">
    <text evidence="1">Belongs to the antibiotic biosynthesis monooxygenase family. Heme-degrading monooxygenase IsdG subfamily.</text>
</comment>
<proteinExistence type="evidence at protein level"/>
<accession>Q8NX62</accession>
<evidence type="ECO:0000255" key="1">
    <source>
        <dbReference type="HAMAP-Rule" id="MF_01272"/>
    </source>
</evidence>
<evidence type="ECO:0000269" key="2">
    <source>
    </source>
</evidence>
<evidence type="ECO:0007829" key="3">
    <source>
        <dbReference type="PDB" id="1XBW"/>
    </source>
</evidence>
<organism>
    <name type="scientific">Staphylococcus aureus (strain MW2)</name>
    <dbReference type="NCBI Taxonomy" id="196620"/>
    <lineage>
        <taxon>Bacteria</taxon>
        <taxon>Bacillati</taxon>
        <taxon>Bacillota</taxon>
        <taxon>Bacilli</taxon>
        <taxon>Bacillales</taxon>
        <taxon>Staphylococcaceae</taxon>
        <taxon>Staphylococcus</taxon>
    </lineage>
</organism>
<dbReference type="EC" id="1.14.99.48" evidence="1"/>
<dbReference type="EMBL" id="BA000033">
    <property type="protein sequence ID" value="BAB94883.1"/>
    <property type="molecule type" value="Genomic_DNA"/>
</dbReference>
<dbReference type="RefSeq" id="WP_000670950.1">
    <property type="nucleotide sequence ID" value="NC_003923.1"/>
</dbReference>
<dbReference type="PDB" id="1XBW">
    <property type="method" value="X-ray"/>
    <property type="resolution" value="1.90 A"/>
    <property type="chains" value="A/B/C/D=1-107"/>
</dbReference>
<dbReference type="PDBsum" id="1XBW"/>
<dbReference type="SMR" id="Q8NX62"/>
<dbReference type="KEGG" id="sam:MW1018"/>
<dbReference type="HOGENOM" id="CLU_141544_2_1_9"/>
<dbReference type="BRENDA" id="1.14.99.48">
    <property type="organism ID" value="3352"/>
</dbReference>
<dbReference type="EvolutionaryTrace" id="Q8NX62"/>
<dbReference type="GO" id="GO:0005737">
    <property type="term" value="C:cytoplasm"/>
    <property type="evidence" value="ECO:0007669"/>
    <property type="project" value="UniProtKB-SubCell"/>
</dbReference>
<dbReference type="GO" id="GO:0020037">
    <property type="term" value="F:heme binding"/>
    <property type="evidence" value="ECO:0007669"/>
    <property type="project" value="UniProtKB-UniRule"/>
</dbReference>
<dbReference type="GO" id="GO:0004392">
    <property type="term" value="F:heme oxygenase (decyclizing) activity"/>
    <property type="evidence" value="ECO:0007669"/>
    <property type="project" value="UniProtKB-UniRule"/>
</dbReference>
<dbReference type="GO" id="GO:0005506">
    <property type="term" value="F:iron ion binding"/>
    <property type="evidence" value="ECO:0007669"/>
    <property type="project" value="UniProtKB-UniRule"/>
</dbReference>
<dbReference type="GO" id="GO:0042167">
    <property type="term" value="P:heme catabolic process"/>
    <property type="evidence" value="ECO:0007669"/>
    <property type="project" value="UniProtKB-UniRule"/>
</dbReference>
<dbReference type="GO" id="GO:0033212">
    <property type="term" value="P:iron import into cell"/>
    <property type="evidence" value="ECO:0007669"/>
    <property type="project" value="InterPro"/>
</dbReference>
<dbReference type="Gene3D" id="3.30.70.100">
    <property type="match status" value="1"/>
</dbReference>
<dbReference type="HAMAP" id="MF_01272">
    <property type="entry name" value="Heme_degrading_monooxygenase"/>
    <property type="match status" value="1"/>
</dbReference>
<dbReference type="InterPro" id="IPR007138">
    <property type="entry name" value="ABM_dom"/>
</dbReference>
<dbReference type="InterPro" id="IPR011008">
    <property type="entry name" value="Dimeric_a/b-barrel"/>
</dbReference>
<dbReference type="InterPro" id="IPR050404">
    <property type="entry name" value="Heme-degrading_MO"/>
</dbReference>
<dbReference type="InterPro" id="IPR023953">
    <property type="entry name" value="IsdG"/>
</dbReference>
<dbReference type="NCBIfam" id="NF009837">
    <property type="entry name" value="PRK13312.1"/>
    <property type="match status" value="1"/>
</dbReference>
<dbReference type="PANTHER" id="PTHR34474:SF4">
    <property type="entry name" value="HEME OXYGENASE (STAPHYLOBILIN-PRODUCING) 1"/>
    <property type="match status" value="1"/>
</dbReference>
<dbReference type="PANTHER" id="PTHR34474">
    <property type="entry name" value="SIGNAL TRANSDUCTION PROTEIN TRAP"/>
    <property type="match status" value="1"/>
</dbReference>
<dbReference type="Pfam" id="PF03992">
    <property type="entry name" value="ABM"/>
    <property type="match status" value="1"/>
</dbReference>
<dbReference type="SUPFAM" id="SSF54909">
    <property type="entry name" value="Dimeric alpha+beta barrel"/>
    <property type="match status" value="1"/>
</dbReference>
<dbReference type="PROSITE" id="PS51725">
    <property type="entry name" value="ABM"/>
    <property type="match status" value="1"/>
</dbReference>
<name>HDOX1_STAAW</name>
<sequence length="107" mass="12546">MKFMAENRLTLTKGTAKDIIERFYTRHGIETLEGFDGMFVTQTLEQEDFDEVKILTVWKSKQAFTDWLKSDVFKAAHKHVRSKNEDESSPIINNKVITYDIGYSYMK</sequence>
<reference key="1">
    <citation type="journal article" date="2002" name="Lancet">
        <title>Genome and virulence determinants of high virulence community-acquired MRSA.</title>
        <authorList>
            <person name="Baba T."/>
            <person name="Takeuchi F."/>
            <person name="Kuroda M."/>
            <person name="Yuzawa H."/>
            <person name="Aoki K."/>
            <person name="Oguchi A."/>
            <person name="Nagai Y."/>
            <person name="Iwama N."/>
            <person name="Asano K."/>
            <person name="Naimi T."/>
            <person name="Kuroda H."/>
            <person name="Cui L."/>
            <person name="Yamamoto K."/>
            <person name="Hiramatsu K."/>
        </authorList>
    </citation>
    <scope>NUCLEOTIDE SEQUENCE [LARGE SCALE GENOMIC DNA]</scope>
    <source>
        <strain>MW2</strain>
    </source>
</reference>
<reference key="2">
    <citation type="journal article" date="2005" name="J. Biol. Chem.">
        <title>Staphylococcus aureus IsdG and IsdI, heme-degrading enzymes with structural similarity to monooxygenases.</title>
        <authorList>
            <person name="Wu R."/>
            <person name="Skaar E.P."/>
            <person name="Zhang R."/>
            <person name="Joachimiak G."/>
            <person name="Gornicki P."/>
            <person name="Schneewind O."/>
            <person name="Joachimiak A."/>
        </authorList>
    </citation>
    <scope>X-RAY CRYSTALLOGRAPHY (1.9 ANGSTROMS)</scope>
    <scope>FUNCTION</scope>
    <scope>SUBUNIT</scope>
    <scope>MUTAGENESIS OF ASN-7; LYS-17; PHE-23; MET-38; TRP-67; SER-70 AND HIS-77</scope>
</reference>
<feature type="chain" id="PRO_0000270089" description="Heme oxygenase (staphylobilin-producing) 1">
    <location>
        <begin position="1"/>
        <end position="107"/>
    </location>
</feature>
<feature type="domain" description="ABM" evidence="1">
    <location>
        <begin position="3"/>
        <end position="92"/>
    </location>
</feature>
<feature type="binding site" evidence="1">
    <location>
        <position position="7"/>
    </location>
    <ligand>
        <name>Fe cation</name>
        <dbReference type="ChEBI" id="CHEBI:24875"/>
    </ligand>
</feature>
<feature type="binding site" evidence="1">
    <location>
        <begin position="22"/>
        <end position="29"/>
    </location>
    <ligand>
        <name>heme</name>
        <dbReference type="ChEBI" id="CHEBI:30413"/>
    </ligand>
</feature>
<feature type="binding site" description="axial binding residue" evidence="1">
    <location>
        <position position="77"/>
    </location>
    <ligand>
        <name>heme</name>
        <dbReference type="ChEBI" id="CHEBI:30413"/>
    </ligand>
    <ligandPart>
        <name>Fe</name>
        <dbReference type="ChEBI" id="CHEBI:18248"/>
    </ligandPart>
</feature>
<feature type="site" description="Transition state stabilizer" evidence="1">
    <location>
        <position position="67"/>
    </location>
</feature>
<feature type="mutagenesis site" description="Loss of activity." evidence="2">
    <original>N</original>
    <variation>A</variation>
    <location>
        <position position="7"/>
    </location>
</feature>
<feature type="mutagenesis site" description="No effect." evidence="2">
    <original>K</original>
    <variation>A</variation>
    <location>
        <position position="17"/>
    </location>
</feature>
<feature type="mutagenesis site" description="No effect." evidence="2">
    <original>F</original>
    <variation>A</variation>
    <location>
        <position position="23"/>
    </location>
</feature>
<feature type="mutagenesis site" description="Slight loss of activity. Changes in heme binding." evidence="2">
    <original>M</original>
    <variation>A</variation>
    <location>
        <position position="38"/>
    </location>
</feature>
<feature type="mutagenesis site" description="Loss of activity." evidence="2">
    <original>W</original>
    <variation>A</variation>
    <location>
        <position position="67"/>
    </location>
</feature>
<feature type="mutagenesis site" description="No effect." evidence="2">
    <original>S</original>
    <variation>A</variation>
    <location>
        <position position="70"/>
    </location>
</feature>
<feature type="mutagenesis site" description="Loss of activity." evidence="2">
    <original>H</original>
    <variation>A</variation>
    <location>
        <position position="77"/>
    </location>
</feature>
<feature type="strand" evidence="3">
    <location>
        <begin position="3"/>
        <end position="12"/>
    </location>
</feature>
<feature type="helix" evidence="3">
    <location>
        <begin position="16"/>
        <end position="21"/>
    </location>
</feature>
<feature type="helix" evidence="3">
    <location>
        <begin position="29"/>
        <end position="31"/>
    </location>
</feature>
<feature type="strand" evidence="3">
    <location>
        <begin position="35"/>
        <end position="45"/>
    </location>
</feature>
<feature type="strand" evidence="3">
    <location>
        <begin position="47"/>
        <end position="60"/>
    </location>
</feature>
<feature type="helix" evidence="3">
    <location>
        <begin position="61"/>
        <end position="68"/>
    </location>
</feature>
<feature type="helix" evidence="3">
    <location>
        <begin position="71"/>
        <end position="79"/>
    </location>
</feature>
<feature type="turn" evidence="3">
    <location>
        <begin position="83"/>
        <end position="85"/>
    </location>
</feature>
<feature type="strand" evidence="3">
    <location>
        <begin position="91"/>
        <end position="106"/>
    </location>
</feature>